<proteinExistence type="inferred from homology"/>
<reference key="1">
    <citation type="journal article" date="2001" name="Nature">
        <title>Complete genome sequence of a multiple drug resistant Salmonella enterica serovar Typhi CT18.</title>
        <authorList>
            <person name="Parkhill J."/>
            <person name="Dougan G."/>
            <person name="James K.D."/>
            <person name="Thomson N.R."/>
            <person name="Pickard D."/>
            <person name="Wain J."/>
            <person name="Churcher C.M."/>
            <person name="Mungall K.L."/>
            <person name="Bentley S.D."/>
            <person name="Holden M.T.G."/>
            <person name="Sebaihia M."/>
            <person name="Baker S."/>
            <person name="Basham D."/>
            <person name="Brooks K."/>
            <person name="Chillingworth T."/>
            <person name="Connerton P."/>
            <person name="Cronin A."/>
            <person name="Davis P."/>
            <person name="Davies R.M."/>
            <person name="Dowd L."/>
            <person name="White N."/>
            <person name="Farrar J."/>
            <person name="Feltwell T."/>
            <person name="Hamlin N."/>
            <person name="Haque A."/>
            <person name="Hien T.T."/>
            <person name="Holroyd S."/>
            <person name="Jagels K."/>
            <person name="Krogh A."/>
            <person name="Larsen T.S."/>
            <person name="Leather S."/>
            <person name="Moule S."/>
            <person name="O'Gaora P."/>
            <person name="Parry C."/>
            <person name="Quail M.A."/>
            <person name="Rutherford K.M."/>
            <person name="Simmonds M."/>
            <person name="Skelton J."/>
            <person name="Stevens K."/>
            <person name="Whitehead S."/>
            <person name="Barrell B.G."/>
        </authorList>
    </citation>
    <scope>NUCLEOTIDE SEQUENCE [LARGE SCALE GENOMIC DNA]</scope>
    <source>
        <strain>CT18</strain>
    </source>
</reference>
<reference key="2">
    <citation type="journal article" date="2003" name="J. Bacteriol.">
        <title>Comparative genomics of Salmonella enterica serovar Typhi strains Ty2 and CT18.</title>
        <authorList>
            <person name="Deng W."/>
            <person name="Liou S.-R."/>
            <person name="Plunkett G. III"/>
            <person name="Mayhew G.F."/>
            <person name="Rose D.J."/>
            <person name="Burland V."/>
            <person name="Kodoyianni V."/>
            <person name="Schwartz D.C."/>
            <person name="Blattner F.R."/>
        </authorList>
    </citation>
    <scope>NUCLEOTIDE SEQUENCE [LARGE SCALE GENOMIC DNA]</scope>
    <source>
        <strain>ATCC 700931 / Ty2</strain>
    </source>
</reference>
<feature type="initiator methionine" description="Removed" evidence="1">
    <location>
        <position position="1"/>
    </location>
</feature>
<feature type="chain" id="PRO_0000135374" description="Glutamine--fructose-6-phosphate aminotransferase [isomerizing]">
    <location>
        <begin position="2"/>
        <end position="609"/>
    </location>
</feature>
<feature type="domain" description="Glutamine amidotransferase type-2" evidence="1">
    <location>
        <begin position="2"/>
        <end position="218"/>
    </location>
</feature>
<feature type="domain" description="SIS 1" evidence="1">
    <location>
        <begin position="286"/>
        <end position="426"/>
    </location>
</feature>
<feature type="domain" description="SIS 2" evidence="1">
    <location>
        <begin position="458"/>
        <end position="599"/>
    </location>
</feature>
<feature type="active site" description="Nucleophile; for GATase activity" evidence="1">
    <location>
        <position position="2"/>
    </location>
</feature>
<feature type="active site" description="For Fru-6P isomerization activity" evidence="1">
    <location>
        <position position="604"/>
    </location>
</feature>
<comment type="function">
    <text evidence="1">Catalyzes the first step in hexosamine metabolism, converting fructose-6P into glucosamine-6P using glutamine as a nitrogen source.</text>
</comment>
<comment type="catalytic activity">
    <reaction evidence="1">
        <text>D-fructose 6-phosphate + L-glutamine = D-glucosamine 6-phosphate + L-glutamate</text>
        <dbReference type="Rhea" id="RHEA:13237"/>
        <dbReference type="ChEBI" id="CHEBI:29985"/>
        <dbReference type="ChEBI" id="CHEBI:58359"/>
        <dbReference type="ChEBI" id="CHEBI:58725"/>
        <dbReference type="ChEBI" id="CHEBI:61527"/>
        <dbReference type="EC" id="2.6.1.16"/>
    </reaction>
</comment>
<comment type="subunit">
    <text evidence="1">Homodimer.</text>
</comment>
<comment type="subcellular location">
    <subcellularLocation>
        <location evidence="1">Cytoplasm</location>
    </subcellularLocation>
</comment>
<keyword id="KW-0032">Aminotransferase</keyword>
<keyword id="KW-0963">Cytoplasm</keyword>
<keyword id="KW-0315">Glutamine amidotransferase</keyword>
<keyword id="KW-0677">Repeat</keyword>
<keyword id="KW-0808">Transferase</keyword>
<name>GLMS_SALTI</name>
<gene>
    <name evidence="1" type="primary">glmS</name>
    <name type="ordered locus">STY3917</name>
    <name type="ordered locus">t3658</name>
</gene>
<protein>
    <recommendedName>
        <fullName evidence="1">Glutamine--fructose-6-phosphate aminotransferase [isomerizing]</fullName>
        <ecNumber evidence="1">2.6.1.16</ecNumber>
    </recommendedName>
    <alternativeName>
        <fullName evidence="1">D-fructose-6-phosphate amidotransferase</fullName>
    </alternativeName>
    <alternativeName>
        <fullName evidence="1">GFAT</fullName>
    </alternativeName>
    <alternativeName>
        <fullName evidence="1">Glucosamine-6-phosphate synthase</fullName>
    </alternativeName>
    <alternativeName>
        <fullName evidence="1">Hexosephosphate aminotransferase</fullName>
    </alternativeName>
    <alternativeName>
        <fullName evidence="1">L-glutamine--D-fructose-6-phosphate amidotransferase</fullName>
    </alternativeName>
</protein>
<sequence>MCGIVGAIAQRDVAEILLEGLRRLEYRGYDSAGLAVVDAEGHMTRLRRLGKVQMLAQAAEEHPLHGGTGIAHTRWATHGEPSEANAHPHVSEHIVVVHNGIIENHEPLREALKARGYTFVSETDTEVIAHLVNWELKQGGTLRDAILRAIPQLRGAYGTVIMDTRHPDTLLAARSGSPLVIGLGMGENFIASDQLALLPVTRRFIFLEEGDIAEITRRSVNIFDNTGAEVKRQDIESNLQYDAGDKGIYRHYMQKEIYEQPNAIKNTLTGRISHGQVDLSELGPNADDLLSKVEHIQILACGTSYNSGMVSRYWFESLAGIPCDVEIASEFRYRKSAVRRNSLMITLSQSGETADTLAGLRLSKELGYLGSLAICNVPGSSLVRESDLALMTNAGTEIGVASTKAFTTQLTVLLMLVAKLSRLKGLDASIEHDIVHGLQALPSRIEQMLSQDKRIELLAEDFSDKHHALFLGRGDQYPIALEGALKLKEISYIHAEAYAAGELKHGPLALIDADMPVIVVAPNNELLEKLKSNIEEVRARGGQLYVFSDQDAGFVSSDNMHIIEMPHVEEVIAPIFYTVPLQLLAYHVALIKGTDVDQPRNLAKSVTVE</sequence>
<accession>Q8Z2Q2</accession>
<organism>
    <name type="scientific">Salmonella typhi</name>
    <dbReference type="NCBI Taxonomy" id="90370"/>
    <lineage>
        <taxon>Bacteria</taxon>
        <taxon>Pseudomonadati</taxon>
        <taxon>Pseudomonadota</taxon>
        <taxon>Gammaproteobacteria</taxon>
        <taxon>Enterobacterales</taxon>
        <taxon>Enterobacteriaceae</taxon>
        <taxon>Salmonella</taxon>
    </lineage>
</organism>
<evidence type="ECO:0000255" key="1">
    <source>
        <dbReference type="HAMAP-Rule" id="MF_00164"/>
    </source>
</evidence>
<dbReference type="EC" id="2.6.1.16" evidence="1"/>
<dbReference type="EMBL" id="AL513382">
    <property type="protein sequence ID" value="CAD03134.1"/>
    <property type="molecule type" value="Genomic_DNA"/>
</dbReference>
<dbReference type="EMBL" id="AE014613">
    <property type="protein sequence ID" value="AAO71155.1"/>
    <property type="molecule type" value="Genomic_DNA"/>
</dbReference>
<dbReference type="RefSeq" id="NP_458082.1">
    <property type="nucleotide sequence ID" value="NC_003198.1"/>
</dbReference>
<dbReference type="RefSeq" id="WP_000334049.1">
    <property type="nucleotide sequence ID" value="NZ_WSUR01000023.1"/>
</dbReference>
<dbReference type="SMR" id="Q8Z2Q2"/>
<dbReference type="STRING" id="220341.gene:17587777"/>
<dbReference type="KEGG" id="stt:t3658"/>
<dbReference type="KEGG" id="sty:STY3917"/>
<dbReference type="PATRIC" id="fig|220341.7.peg.3997"/>
<dbReference type="eggNOG" id="COG0449">
    <property type="taxonomic scope" value="Bacteria"/>
</dbReference>
<dbReference type="HOGENOM" id="CLU_012520_5_2_6"/>
<dbReference type="OMA" id="ASEYRYA"/>
<dbReference type="OrthoDB" id="9761808at2"/>
<dbReference type="Proteomes" id="UP000000541">
    <property type="component" value="Chromosome"/>
</dbReference>
<dbReference type="Proteomes" id="UP000002670">
    <property type="component" value="Chromosome"/>
</dbReference>
<dbReference type="GO" id="GO:0005829">
    <property type="term" value="C:cytosol"/>
    <property type="evidence" value="ECO:0007669"/>
    <property type="project" value="TreeGrafter"/>
</dbReference>
<dbReference type="GO" id="GO:0097367">
    <property type="term" value="F:carbohydrate derivative binding"/>
    <property type="evidence" value="ECO:0007669"/>
    <property type="project" value="InterPro"/>
</dbReference>
<dbReference type="GO" id="GO:0004360">
    <property type="term" value="F:glutamine-fructose-6-phosphate transaminase (isomerizing) activity"/>
    <property type="evidence" value="ECO:0007669"/>
    <property type="project" value="UniProtKB-UniRule"/>
</dbReference>
<dbReference type="GO" id="GO:0005975">
    <property type="term" value="P:carbohydrate metabolic process"/>
    <property type="evidence" value="ECO:0007669"/>
    <property type="project" value="UniProtKB-UniRule"/>
</dbReference>
<dbReference type="GO" id="GO:0006002">
    <property type="term" value="P:fructose 6-phosphate metabolic process"/>
    <property type="evidence" value="ECO:0007669"/>
    <property type="project" value="TreeGrafter"/>
</dbReference>
<dbReference type="GO" id="GO:0006487">
    <property type="term" value="P:protein N-linked glycosylation"/>
    <property type="evidence" value="ECO:0007669"/>
    <property type="project" value="TreeGrafter"/>
</dbReference>
<dbReference type="GO" id="GO:0006047">
    <property type="term" value="P:UDP-N-acetylglucosamine metabolic process"/>
    <property type="evidence" value="ECO:0007669"/>
    <property type="project" value="TreeGrafter"/>
</dbReference>
<dbReference type="CDD" id="cd00714">
    <property type="entry name" value="GFAT"/>
    <property type="match status" value="1"/>
</dbReference>
<dbReference type="CDD" id="cd05008">
    <property type="entry name" value="SIS_GlmS_GlmD_1"/>
    <property type="match status" value="1"/>
</dbReference>
<dbReference type="CDD" id="cd05009">
    <property type="entry name" value="SIS_GlmS_GlmD_2"/>
    <property type="match status" value="1"/>
</dbReference>
<dbReference type="FunFam" id="3.40.50.10490:FF:000001">
    <property type="entry name" value="Glutamine--fructose-6-phosphate aminotransferase [isomerizing]"/>
    <property type="match status" value="1"/>
</dbReference>
<dbReference type="FunFam" id="3.40.50.10490:FF:000002">
    <property type="entry name" value="Glutamine--fructose-6-phosphate aminotransferase [isomerizing]"/>
    <property type="match status" value="1"/>
</dbReference>
<dbReference type="FunFam" id="3.60.20.10:FF:000006">
    <property type="entry name" value="Glutamine--fructose-6-phosphate aminotransferase [isomerizing]"/>
    <property type="match status" value="1"/>
</dbReference>
<dbReference type="Gene3D" id="3.40.50.10490">
    <property type="entry name" value="Glucose-6-phosphate isomerase like protein, domain 1"/>
    <property type="match status" value="2"/>
</dbReference>
<dbReference type="Gene3D" id="3.60.20.10">
    <property type="entry name" value="Glutamine Phosphoribosylpyrophosphate, subunit 1, domain 1"/>
    <property type="match status" value="1"/>
</dbReference>
<dbReference type="HAMAP" id="MF_00164">
    <property type="entry name" value="GlmS"/>
    <property type="match status" value="1"/>
</dbReference>
<dbReference type="InterPro" id="IPR017932">
    <property type="entry name" value="GATase_2_dom"/>
</dbReference>
<dbReference type="InterPro" id="IPR005855">
    <property type="entry name" value="GFAT"/>
</dbReference>
<dbReference type="InterPro" id="IPR047084">
    <property type="entry name" value="GFAT_N"/>
</dbReference>
<dbReference type="InterPro" id="IPR035466">
    <property type="entry name" value="GlmS/AgaS_SIS"/>
</dbReference>
<dbReference type="InterPro" id="IPR035490">
    <property type="entry name" value="GlmS/FrlB_SIS"/>
</dbReference>
<dbReference type="InterPro" id="IPR029055">
    <property type="entry name" value="Ntn_hydrolases_N"/>
</dbReference>
<dbReference type="InterPro" id="IPR001347">
    <property type="entry name" value="SIS_dom"/>
</dbReference>
<dbReference type="InterPro" id="IPR046348">
    <property type="entry name" value="SIS_dom_sf"/>
</dbReference>
<dbReference type="NCBIfam" id="TIGR01135">
    <property type="entry name" value="glmS"/>
    <property type="match status" value="1"/>
</dbReference>
<dbReference type="NCBIfam" id="NF001484">
    <property type="entry name" value="PRK00331.1"/>
    <property type="match status" value="1"/>
</dbReference>
<dbReference type="PANTHER" id="PTHR10937">
    <property type="entry name" value="GLUCOSAMINE--FRUCTOSE-6-PHOSPHATE AMINOTRANSFERASE, ISOMERIZING"/>
    <property type="match status" value="1"/>
</dbReference>
<dbReference type="PANTHER" id="PTHR10937:SF0">
    <property type="entry name" value="GLUTAMINE--FRUCTOSE-6-PHOSPHATE TRANSAMINASE (ISOMERIZING)"/>
    <property type="match status" value="1"/>
</dbReference>
<dbReference type="Pfam" id="PF13522">
    <property type="entry name" value="GATase_6"/>
    <property type="match status" value="1"/>
</dbReference>
<dbReference type="Pfam" id="PF01380">
    <property type="entry name" value="SIS"/>
    <property type="match status" value="2"/>
</dbReference>
<dbReference type="SUPFAM" id="SSF56235">
    <property type="entry name" value="N-terminal nucleophile aminohydrolases (Ntn hydrolases)"/>
    <property type="match status" value="1"/>
</dbReference>
<dbReference type="SUPFAM" id="SSF53697">
    <property type="entry name" value="SIS domain"/>
    <property type="match status" value="1"/>
</dbReference>
<dbReference type="PROSITE" id="PS51278">
    <property type="entry name" value="GATASE_TYPE_2"/>
    <property type="match status" value="1"/>
</dbReference>
<dbReference type="PROSITE" id="PS51464">
    <property type="entry name" value="SIS"/>
    <property type="match status" value="2"/>
</dbReference>